<evidence type="ECO:0000250" key="1"/>
<evidence type="ECO:0000250" key="2">
    <source>
        <dbReference type="UniProtKB" id="Q96FE5"/>
    </source>
</evidence>
<evidence type="ECO:0000250" key="3">
    <source>
        <dbReference type="UniProtKB" id="Q9D1T0"/>
    </source>
</evidence>
<evidence type="ECO:0000255" key="4"/>
<evidence type="ECO:0000255" key="5">
    <source>
        <dbReference type="PROSITE-ProRule" id="PRU00114"/>
    </source>
</evidence>
<dbReference type="EMBL" id="CR857914">
    <property type="protein sequence ID" value="CAH90163.1"/>
    <property type="molecule type" value="mRNA"/>
</dbReference>
<dbReference type="RefSeq" id="NP_001125050.1">
    <property type="nucleotide sequence ID" value="NM_001131578.1"/>
</dbReference>
<dbReference type="SMR" id="Q5RDJ4"/>
<dbReference type="FunCoup" id="Q5RDJ4">
    <property type="interactions" value="406"/>
</dbReference>
<dbReference type="GlyCosmos" id="Q5RDJ4">
    <property type="glycosylation" value="10 sites, No reported glycans"/>
</dbReference>
<dbReference type="GeneID" id="100171931"/>
<dbReference type="KEGG" id="pon:100171931"/>
<dbReference type="CTD" id="84894"/>
<dbReference type="InParanoid" id="Q5RDJ4"/>
<dbReference type="OrthoDB" id="10061535at2759"/>
<dbReference type="Proteomes" id="UP000001595">
    <property type="component" value="Unplaced"/>
</dbReference>
<dbReference type="GO" id="GO:0005886">
    <property type="term" value="C:plasma membrane"/>
    <property type="evidence" value="ECO:0007669"/>
    <property type="project" value="UniProtKB-SubCell"/>
</dbReference>
<dbReference type="CDD" id="cd20969">
    <property type="entry name" value="IgI_Lingo-1"/>
    <property type="match status" value="1"/>
</dbReference>
<dbReference type="FunFam" id="2.60.40.10:FF:000076">
    <property type="entry name" value="Leucine-rich repeat and Ig domain-containing 4"/>
    <property type="match status" value="1"/>
</dbReference>
<dbReference type="FunFam" id="3.80.10.10:FF:000014">
    <property type="entry name" value="Leucine-rich repeat and immunoglobulin-like domain-containing nogo receptor-interacting protein 1"/>
    <property type="match status" value="1"/>
</dbReference>
<dbReference type="Gene3D" id="2.60.40.10">
    <property type="entry name" value="Immunoglobulins"/>
    <property type="match status" value="1"/>
</dbReference>
<dbReference type="Gene3D" id="3.80.10.10">
    <property type="entry name" value="Ribonuclease Inhibitor"/>
    <property type="match status" value="1"/>
</dbReference>
<dbReference type="InterPro" id="IPR007110">
    <property type="entry name" value="Ig-like_dom"/>
</dbReference>
<dbReference type="InterPro" id="IPR036179">
    <property type="entry name" value="Ig-like_dom_sf"/>
</dbReference>
<dbReference type="InterPro" id="IPR013783">
    <property type="entry name" value="Ig-like_fold"/>
</dbReference>
<dbReference type="InterPro" id="IPR013098">
    <property type="entry name" value="Ig_I-set"/>
</dbReference>
<dbReference type="InterPro" id="IPR003599">
    <property type="entry name" value="Ig_sub"/>
</dbReference>
<dbReference type="InterPro" id="IPR003598">
    <property type="entry name" value="Ig_sub2"/>
</dbReference>
<dbReference type="InterPro" id="IPR001611">
    <property type="entry name" value="Leu-rich_rpt"/>
</dbReference>
<dbReference type="InterPro" id="IPR003591">
    <property type="entry name" value="Leu-rich_rpt_typical-subtyp"/>
</dbReference>
<dbReference type="InterPro" id="IPR032675">
    <property type="entry name" value="LRR_dom_sf"/>
</dbReference>
<dbReference type="InterPro" id="IPR050541">
    <property type="entry name" value="LRR_TM_domain-containing"/>
</dbReference>
<dbReference type="InterPro" id="IPR000372">
    <property type="entry name" value="LRRNT"/>
</dbReference>
<dbReference type="PANTHER" id="PTHR24369">
    <property type="entry name" value="ANTIGEN BSP, PUTATIVE-RELATED"/>
    <property type="match status" value="1"/>
</dbReference>
<dbReference type="PANTHER" id="PTHR24369:SF178">
    <property type="entry name" value="LEUCINE-RICH REPEAT AND IMMUNOGLOBULIN-LIKE DOMAIN-CONTAINING NOGO RECEPTOR-INTERACTING PROTEIN 1"/>
    <property type="match status" value="1"/>
</dbReference>
<dbReference type="Pfam" id="PF07679">
    <property type="entry name" value="I-set"/>
    <property type="match status" value="1"/>
</dbReference>
<dbReference type="Pfam" id="PF13855">
    <property type="entry name" value="LRR_8"/>
    <property type="match status" value="3"/>
</dbReference>
<dbReference type="SMART" id="SM00409">
    <property type="entry name" value="IG"/>
    <property type="match status" value="1"/>
</dbReference>
<dbReference type="SMART" id="SM00408">
    <property type="entry name" value="IGc2"/>
    <property type="match status" value="1"/>
</dbReference>
<dbReference type="SMART" id="SM00369">
    <property type="entry name" value="LRR_TYP"/>
    <property type="match status" value="9"/>
</dbReference>
<dbReference type="SMART" id="SM00013">
    <property type="entry name" value="LRRNT"/>
    <property type="match status" value="1"/>
</dbReference>
<dbReference type="SUPFAM" id="SSF48726">
    <property type="entry name" value="Immunoglobulin"/>
    <property type="match status" value="1"/>
</dbReference>
<dbReference type="SUPFAM" id="SSF52058">
    <property type="entry name" value="L domain-like"/>
    <property type="match status" value="1"/>
</dbReference>
<dbReference type="PROSITE" id="PS50835">
    <property type="entry name" value="IG_LIKE"/>
    <property type="match status" value="1"/>
</dbReference>
<dbReference type="PROSITE" id="PS51450">
    <property type="entry name" value="LRR"/>
    <property type="match status" value="10"/>
</dbReference>
<feature type="signal peptide" evidence="4">
    <location>
        <begin position="1"/>
        <end position="35"/>
    </location>
</feature>
<feature type="chain" id="PRO_0000328645" description="Leucine-rich repeat and immunoglobulin-like domain-containing nogo receptor-interacting protein 1">
    <location>
        <begin position="36"/>
        <end position="614"/>
    </location>
</feature>
<feature type="topological domain" description="Extracellular" evidence="4">
    <location>
        <begin position="36"/>
        <end position="555"/>
    </location>
</feature>
<feature type="transmembrane region" description="Helical" evidence="4">
    <location>
        <begin position="556"/>
        <end position="576"/>
    </location>
</feature>
<feature type="topological domain" description="Cytoplasmic" evidence="4">
    <location>
        <begin position="577"/>
        <end position="614"/>
    </location>
</feature>
<feature type="domain" description="LRRNT">
    <location>
        <begin position="36"/>
        <end position="65"/>
    </location>
</feature>
<feature type="repeat" description="LRR 1">
    <location>
        <begin position="66"/>
        <end position="87"/>
    </location>
</feature>
<feature type="repeat" description="LRR 2">
    <location>
        <begin position="90"/>
        <end position="111"/>
    </location>
</feature>
<feature type="repeat" description="LRR 3">
    <location>
        <begin position="114"/>
        <end position="135"/>
    </location>
</feature>
<feature type="repeat" description="LRR 4">
    <location>
        <begin position="138"/>
        <end position="159"/>
    </location>
</feature>
<feature type="repeat" description="LRR 5">
    <location>
        <begin position="162"/>
        <end position="183"/>
    </location>
</feature>
<feature type="repeat" description="LRR 6">
    <location>
        <begin position="186"/>
        <end position="207"/>
    </location>
</feature>
<feature type="repeat" description="LRR 7">
    <location>
        <begin position="210"/>
        <end position="231"/>
    </location>
</feature>
<feature type="repeat" description="LRR 8">
    <location>
        <begin position="258"/>
        <end position="279"/>
    </location>
</feature>
<feature type="repeat" description="LRR 9">
    <location>
        <begin position="282"/>
        <end position="303"/>
    </location>
</feature>
<feature type="repeat" description="LRR 10">
    <location>
        <begin position="306"/>
        <end position="327"/>
    </location>
</feature>
<feature type="repeat" description="LRR 11">
    <location>
        <begin position="330"/>
        <end position="351"/>
    </location>
</feature>
<feature type="domain" description="LRRCT">
    <location>
        <begin position="363"/>
        <end position="417"/>
    </location>
</feature>
<feature type="domain" description="Ig-like C2-type">
    <location>
        <begin position="405"/>
        <end position="507"/>
    </location>
</feature>
<feature type="modified residue" description="Phosphoserine" evidence="3">
    <location>
        <position position="596"/>
    </location>
</feature>
<feature type="glycosylation site" description="N-linked (GlcNAc...) asparagine" evidence="4">
    <location>
        <position position="138"/>
    </location>
</feature>
<feature type="glycosylation site" description="N-linked (GlcNAc...) asparagine" evidence="4">
    <location>
        <position position="196"/>
    </location>
</feature>
<feature type="glycosylation site" description="N-linked (GlcNAc...) asparagine" evidence="4">
    <location>
        <position position="258"/>
    </location>
</feature>
<feature type="glycosylation site" description="N-linked (GlcNAc...) asparagine" evidence="4">
    <location>
        <position position="268"/>
    </location>
</feature>
<feature type="glycosylation site" description="N-linked (GlcNAc...) asparagine" evidence="4">
    <location>
        <position position="287"/>
    </location>
</feature>
<feature type="glycosylation site" description="N-linked (GlcNAc...) asparagine" evidence="4">
    <location>
        <position position="335"/>
    </location>
</feature>
<feature type="glycosylation site" description="N-linked (GlcNAc...) asparagine" evidence="4">
    <location>
        <position position="486"/>
    </location>
</feature>
<feature type="glycosylation site" description="N-linked (GlcNAc...) asparagine" evidence="4">
    <location>
        <position position="499"/>
    </location>
</feature>
<feature type="glycosylation site" description="N-linked (GlcNAc...) asparagine" evidence="4">
    <location>
        <position position="520"/>
    </location>
</feature>
<feature type="glycosylation site" description="N-linked (GlcNAc...) asparagine" evidence="4">
    <location>
        <position position="536"/>
    </location>
</feature>
<feature type="disulfide bond" evidence="5">
    <location>
        <begin position="36"/>
        <end position="42"/>
    </location>
</feature>
<feature type="disulfide bond" evidence="5">
    <location>
        <begin position="40"/>
        <end position="51"/>
    </location>
</feature>
<feature type="disulfide bond" evidence="5">
    <location>
        <begin position="367"/>
        <end position="390"/>
    </location>
</feature>
<feature type="disulfide bond" evidence="5">
    <location>
        <begin position="369"/>
        <end position="415"/>
    </location>
</feature>
<feature type="disulfide bond" evidence="5">
    <location>
        <begin position="440"/>
        <end position="491"/>
    </location>
</feature>
<gene>
    <name type="primary">LINGO1</name>
</gene>
<name>LIGO1_PONAB</name>
<accession>Q5RDJ4</accession>
<organism>
    <name type="scientific">Pongo abelii</name>
    <name type="common">Sumatran orangutan</name>
    <name type="synonym">Pongo pygmaeus abelii</name>
    <dbReference type="NCBI Taxonomy" id="9601"/>
    <lineage>
        <taxon>Eukaryota</taxon>
        <taxon>Metazoa</taxon>
        <taxon>Chordata</taxon>
        <taxon>Craniata</taxon>
        <taxon>Vertebrata</taxon>
        <taxon>Euteleostomi</taxon>
        <taxon>Mammalia</taxon>
        <taxon>Eutheria</taxon>
        <taxon>Euarchontoglires</taxon>
        <taxon>Primates</taxon>
        <taxon>Haplorrhini</taxon>
        <taxon>Catarrhini</taxon>
        <taxon>Hominidae</taxon>
        <taxon>Pongo</taxon>
    </lineage>
</organism>
<proteinExistence type="evidence at transcript level"/>
<sequence>MLAGGVRSMPSPLLACWQPILLLVLGSVLSGSATGCPPRCECSAQDRAVLCHRKRFVAVPEGIPTETRLLDLGKNRIKTLNQDEFASFPHLEELELNENIVSAVEPGAFNNLFNLRTLGLRSNRLKLIPLGVFTGLSNLTKLDISENKIVILLDYMFQDLYNLKSLEVGDNDLVYISHRAFSGLNSLEQLTLEKCNLTSIPTEALSHLHGLIVLRLRHLNINAIRDYSFKRLYRLKVLEISHWPYLDTMTPNCLYGLNLTSLSITHCNLTAVPYLAVRHLVYLRFLNLSYNPISTIEGSMLHELLRLQEIQLVGGQLAVVEPYAFRGLNYLRVLNVSGNQLTTLEESVFHSVGNLETLILDSNPLACDCRLLWVFRRRWRLNFNRQQPTCATPEFVQGKEFKDFPDVLLPNYFTCRRARIRDRKAQQVFVDEGHTVQFVCRADGDPPPAILWLSPRKHLVSAKSNGRLTVFPGGTLEVRYAQVQDNGTYLCIAANAGGNDSMPAHLHVRSYSPDWPHQPNKTFAFISNQPGEGEANSTRATVPFPFDIKTLIIATTMGFISFLGVVLFCLVLLFLWSRGKGNTKHNIEIEYVPRKSDAGISSADAPRKFNMKMI</sequence>
<protein>
    <recommendedName>
        <fullName>Leucine-rich repeat and immunoglobulin-like domain-containing nogo receptor-interacting protein 1</fullName>
    </recommendedName>
</protein>
<keyword id="KW-1003">Cell membrane</keyword>
<keyword id="KW-1015">Disulfide bond</keyword>
<keyword id="KW-0325">Glycoprotein</keyword>
<keyword id="KW-0393">Immunoglobulin domain</keyword>
<keyword id="KW-0433">Leucine-rich repeat</keyword>
<keyword id="KW-0472">Membrane</keyword>
<keyword id="KW-0597">Phosphoprotein</keyword>
<keyword id="KW-1185">Reference proteome</keyword>
<keyword id="KW-0677">Repeat</keyword>
<keyword id="KW-0732">Signal</keyword>
<keyword id="KW-0812">Transmembrane</keyword>
<keyword id="KW-1133">Transmembrane helix</keyword>
<comment type="function">
    <text evidence="2 3">Functional component of the Nogo receptor signaling complex (RTN4R/NGFR) in RhoA activation responsible for some inhibition of axonal regeneration by myelin-associated factors. Is also an important negative regulator of oligodentrocyte differentiation and axonal myelination. Acts in conjunction with RTN4 and RTN4R in regulating neuronal precursor cell motility during cortical development (By similarity).</text>
</comment>
<comment type="subunit">
    <text evidence="2 3">Homotetramer. Forms a ternary complex with RTN4R/NGFR and RTN4R/TNFRSF19 (By similarity). Interacts with NGRF, RTN4R and MYT1L (By similarity).</text>
</comment>
<comment type="subcellular location">
    <subcellularLocation>
        <location evidence="3">Cell membrane</location>
        <topology evidence="3">Single-pass type I membrane protein</topology>
    </subcellularLocation>
</comment>
<comment type="domain">
    <text evidence="3">The intracellular domain of LINGO1 interacts with MYT1L.</text>
</comment>
<comment type="PTM">
    <text evidence="1">N-glycosylated. Contains predominantly high-mannose glycans (By similarity).</text>
</comment>
<reference key="1">
    <citation type="submission" date="2004-11" db="EMBL/GenBank/DDBJ databases">
        <authorList>
            <consortium name="The German cDNA consortium"/>
        </authorList>
    </citation>
    <scope>NUCLEOTIDE SEQUENCE [LARGE SCALE MRNA]</scope>
    <source>
        <tissue>Brain cortex</tissue>
    </source>
</reference>